<proteinExistence type="inferred from homology"/>
<dbReference type="EC" id="2.7.1.-"/>
<dbReference type="EMBL" id="U47655">
    <property type="protein sequence ID" value="AAC44113.1"/>
    <property type="molecule type" value="Genomic_DNA"/>
</dbReference>
<dbReference type="SMR" id="Q48624"/>
<dbReference type="STRING" id="1246.BCR17_08340"/>
<dbReference type="GO" id="GO:0005886">
    <property type="term" value="C:plasma membrane"/>
    <property type="evidence" value="ECO:0007669"/>
    <property type="project" value="UniProtKB-SubCell"/>
</dbReference>
<dbReference type="GO" id="GO:0016301">
    <property type="term" value="F:kinase activity"/>
    <property type="evidence" value="ECO:0007669"/>
    <property type="project" value="UniProtKB-KW"/>
</dbReference>
<dbReference type="GO" id="GO:0015293">
    <property type="term" value="F:symporter activity"/>
    <property type="evidence" value="ECO:0007669"/>
    <property type="project" value="UniProtKB-KW"/>
</dbReference>
<dbReference type="GO" id="GO:0009401">
    <property type="term" value="P:phosphoenolpyruvate-dependent sugar phosphotransferase system"/>
    <property type="evidence" value="ECO:0007669"/>
    <property type="project" value="InterPro"/>
</dbReference>
<dbReference type="GO" id="GO:0006814">
    <property type="term" value="P:sodium ion transport"/>
    <property type="evidence" value="ECO:0007669"/>
    <property type="project" value="InterPro"/>
</dbReference>
<dbReference type="CDD" id="cd17332">
    <property type="entry name" value="MFS_MelB_like"/>
    <property type="match status" value="1"/>
</dbReference>
<dbReference type="Gene3D" id="2.70.70.10">
    <property type="entry name" value="Glucose Permease (Domain IIA)"/>
    <property type="match status" value="1"/>
</dbReference>
<dbReference type="Gene3D" id="1.20.1250.20">
    <property type="entry name" value="MFS general substrate transporter like domains"/>
    <property type="match status" value="2"/>
</dbReference>
<dbReference type="InterPro" id="IPR011055">
    <property type="entry name" value="Dup_hybrid_motif"/>
</dbReference>
<dbReference type="InterPro" id="IPR039672">
    <property type="entry name" value="MFS_2"/>
</dbReference>
<dbReference type="InterPro" id="IPR036259">
    <property type="entry name" value="MFS_trans_sf"/>
</dbReference>
<dbReference type="InterPro" id="IPR001927">
    <property type="entry name" value="Na/Gal_symport"/>
</dbReference>
<dbReference type="InterPro" id="IPR018043">
    <property type="entry name" value="Na/Gal_symport_CS"/>
</dbReference>
<dbReference type="InterPro" id="IPR001127">
    <property type="entry name" value="PTS_EIIA_1_perm"/>
</dbReference>
<dbReference type="NCBIfam" id="TIGR00792">
    <property type="entry name" value="gph"/>
    <property type="match status" value="1"/>
</dbReference>
<dbReference type="NCBIfam" id="TIGR00830">
    <property type="entry name" value="PTBA"/>
    <property type="match status" value="1"/>
</dbReference>
<dbReference type="PANTHER" id="PTHR11328:SF24">
    <property type="entry name" value="MAJOR FACILITATOR SUPERFAMILY (MFS) PROFILE DOMAIN-CONTAINING PROTEIN"/>
    <property type="match status" value="1"/>
</dbReference>
<dbReference type="PANTHER" id="PTHR11328">
    <property type="entry name" value="MAJOR FACILITATOR SUPERFAMILY DOMAIN-CONTAINING PROTEIN"/>
    <property type="match status" value="1"/>
</dbReference>
<dbReference type="Pfam" id="PF13347">
    <property type="entry name" value="MFS_2"/>
    <property type="match status" value="1"/>
</dbReference>
<dbReference type="Pfam" id="PF00358">
    <property type="entry name" value="PTS_EIIA_1"/>
    <property type="match status" value="1"/>
</dbReference>
<dbReference type="SUPFAM" id="SSF51261">
    <property type="entry name" value="Duplicated hybrid motif"/>
    <property type="match status" value="1"/>
</dbReference>
<dbReference type="SUPFAM" id="SSF103473">
    <property type="entry name" value="MFS general substrate transporter"/>
    <property type="match status" value="1"/>
</dbReference>
<dbReference type="PROSITE" id="PS00872">
    <property type="entry name" value="NA_GALACTOSIDE_SYMP"/>
    <property type="match status" value="1"/>
</dbReference>
<dbReference type="PROSITE" id="PS51093">
    <property type="entry name" value="PTS_EIIA_TYPE_1"/>
    <property type="match status" value="1"/>
</dbReference>
<dbReference type="PROSITE" id="PS00371">
    <property type="entry name" value="PTS_EIIA_TYPE_1_HIS"/>
    <property type="match status" value="1"/>
</dbReference>
<evidence type="ECO:0000250" key="1"/>
<evidence type="ECO:0000255" key="2"/>
<evidence type="ECO:0000255" key="3">
    <source>
        <dbReference type="PROSITE-ProRule" id="PRU00416"/>
    </source>
</evidence>
<evidence type="ECO:0000305" key="4"/>
<gene>
    <name type="primary">lacS</name>
</gene>
<accession>Q48624</accession>
<reference key="1">
    <citation type="journal article" date="1996" name="Appl. Environ. Microbiol.">
        <title>The lactose transporter in Leuconostoc lactis is a new member of the LacS subfamily of galactoside-pentose-hexuronide translocators.</title>
        <authorList>
            <person name="Vaughan E.E."/>
            <person name="David S."/>
            <person name="de Vos W.M."/>
        </authorList>
    </citation>
    <scope>NUCLEOTIDE SEQUENCE [GENOMIC DNA]</scope>
    <source>
        <strain>NZ6009</strain>
    </source>
</reference>
<keyword id="KW-1003">Cell membrane</keyword>
<keyword id="KW-0418">Kinase</keyword>
<keyword id="KW-0472">Membrane</keyword>
<keyword id="KW-0597">Phosphoprotein</keyword>
<keyword id="KW-0614">Plasmid</keyword>
<keyword id="KW-0762">Sugar transport</keyword>
<keyword id="KW-0769">Symport</keyword>
<keyword id="KW-0808">Transferase</keyword>
<keyword id="KW-0812">Transmembrane</keyword>
<keyword id="KW-1133">Transmembrane helix</keyword>
<keyword id="KW-0813">Transport</keyword>
<protein>
    <recommendedName>
        <fullName>Lactose permease</fullName>
    </recommendedName>
    <alternativeName>
        <fullName>Lactose transport protein</fullName>
    </alternativeName>
    <alternativeName>
        <fullName>Lactose-proton symporter</fullName>
    </alternativeName>
    <domain>
        <recommendedName>
            <fullName>Putative phosphotransferase enzyme IIA component</fullName>
            <ecNumber>2.7.1.-</ecNumber>
        </recommendedName>
        <alternativeName>
            <fullName>Putative PTS system EIIA component</fullName>
        </alternativeName>
    </domain>
</protein>
<feature type="chain" id="PRO_0000170759" description="Lactose permease">
    <location>
        <begin position="1"/>
        <end position="639"/>
    </location>
</feature>
<feature type="transmembrane region" description="Helical" evidence="2">
    <location>
        <begin position="20"/>
        <end position="40"/>
    </location>
</feature>
<feature type="transmembrane region" description="Helical" evidence="2">
    <location>
        <begin position="59"/>
        <end position="79"/>
    </location>
</feature>
<feature type="transmembrane region" description="Helical" evidence="2">
    <location>
        <begin position="99"/>
        <end position="119"/>
    </location>
</feature>
<feature type="transmembrane region" description="Helical" evidence="2">
    <location>
        <begin position="124"/>
        <end position="144"/>
    </location>
</feature>
<feature type="transmembrane region" description="Helical" evidence="2">
    <location>
        <begin position="176"/>
        <end position="196"/>
    </location>
</feature>
<feature type="transmembrane region" description="Helical" evidence="2">
    <location>
        <begin position="207"/>
        <end position="227"/>
    </location>
</feature>
<feature type="transmembrane region" description="Helical" evidence="2">
    <location>
        <begin position="264"/>
        <end position="284"/>
    </location>
</feature>
<feature type="transmembrane region" description="Helical" evidence="2">
    <location>
        <begin position="294"/>
        <end position="314"/>
    </location>
</feature>
<feature type="transmembrane region" description="Helical" evidence="2">
    <location>
        <begin position="322"/>
        <end position="342"/>
    </location>
</feature>
<feature type="transmembrane region" description="Helical" evidence="2">
    <location>
        <begin position="347"/>
        <end position="367"/>
    </location>
</feature>
<feature type="transmembrane region" description="Helical" evidence="2">
    <location>
        <begin position="398"/>
        <end position="418"/>
    </location>
</feature>
<feature type="transmembrane region" description="Helical" evidence="2">
    <location>
        <begin position="433"/>
        <end position="453"/>
    </location>
</feature>
<feature type="domain" description="PTS EIIA type-1" evidence="3">
    <location>
        <begin position="505"/>
        <end position="609"/>
    </location>
</feature>
<feature type="region of interest" description="Permease">
    <location>
        <begin position="1"/>
        <end position="473"/>
    </location>
</feature>
<feature type="modified residue" description="Phosphohistidine; by HPr" evidence="1">
    <location>
        <position position="557"/>
    </location>
</feature>
<organism>
    <name type="scientific">Leuconostoc lactis</name>
    <dbReference type="NCBI Taxonomy" id="1246"/>
    <lineage>
        <taxon>Bacteria</taxon>
        <taxon>Bacillati</taxon>
        <taxon>Bacillota</taxon>
        <taxon>Bacilli</taxon>
        <taxon>Lactobacillales</taxon>
        <taxon>Lactobacillaceae</taxon>
        <taxon>Leuconostoc</taxon>
    </lineage>
</organism>
<comment type="function">
    <text>Responsible for transport of beta-galactosides into the cell, with the concomitant uptake of protons (symport system), and also for transport of homologous and heterologous exchange of beta-galactosides.</text>
</comment>
<comment type="subcellular location">
    <subcellularLocation>
        <location>Cell membrane</location>
        <topology>Multi-pass membrane protein</topology>
    </subcellularLocation>
</comment>
<comment type="domain">
    <text>The PTS EIIA type-1 domain may serve a regulatory function, through its phosphorylation activity.</text>
</comment>
<comment type="similarity">
    <text evidence="4">In the N-terminal section; belongs to the sodium:galactoside symporter (TC 2.A.2) family.</text>
</comment>
<geneLocation type="plasmid">
    <name>pNZ63</name>
</geneLocation>
<name>LACY_LEULA</name>
<sequence>MKDITKQKFSRNKLVEMISFALGNLGHAAFYGALSTYFIVYVTSGMFDGLPQSVANKLIGLITALVVIIRLAEVIIDPILGNIVDNTKTRWGKFKPWQVIGAVVSSVLLVVIFTGIFGLAHINWIAFAIVFTVLFILLDIFYSFADVAYWGMVPAISEDSKERGIFTSLGSFTGSIGWNGLTMIVVPVTTYFTFIATGKHEQGPSGWFGFSIVVSIVAVLSALAVAFGTKEKDNLIRNAATKKTSIKDVFSGIIHNDQILWISLAYLMYSLAYVVTNGVLFYFFKFVLGKPNEFWIAGAIATVIGFSTAPLYPVLNKFITRKVLFSIGQMAMILSYLFFIFGKTNMMMVTIGLILFNFTFAQLVVVLSLTDSIEYGQLKNGNRNEAVVLAVRPMLDKITGAFSNGLVGAIAITAGMTGSATAGDISASKINTFEIYAFYTPLLFSILALVIFLWKVKITEKKHAEIVIELEKTLSSGAKKANTSEVNVELEEIFAPASGQKKLLNEVDGNTLTGIGFAIDPEEGNLFAPFDGKVDFTFSTKHVLGVVSNNGLKAIIHVGIGTINMRGAGFVSHYVDGQLFKKGDLLMTFDKKLITKNGYQDDIIMYFTQPENIIDVQQIDNRVVKQGEKIAKLTFRSER</sequence>